<sequence length="89" mass="9943">MSRSSKKGPFVDPKVFFKVQKAAETGSKEPIKTWARSCTIVPEFVNVTFMVHNGRQHIKVLVTEDMVGHKLGEFAPTRTFKGHGGKGKR</sequence>
<organism>
    <name type="scientific">Rhodopirellula baltica (strain DSM 10527 / NCIMB 13988 / SH1)</name>
    <dbReference type="NCBI Taxonomy" id="243090"/>
    <lineage>
        <taxon>Bacteria</taxon>
        <taxon>Pseudomonadati</taxon>
        <taxon>Planctomycetota</taxon>
        <taxon>Planctomycetia</taxon>
        <taxon>Pirellulales</taxon>
        <taxon>Pirellulaceae</taxon>
        <taxon>Rhodopirellula</taxon>
    </lineage>
</organism>
<dbReference type="EMBL" id="BX294146">
    <property type="protein sequence ID" value="CAD75603.1"/>
    <property type="molecule type" value="Genomic_DNA"/>
</dbReference>
<dbReference type="RefSeq" id="NP_868056.1">
    <property type="nucleotide sequence ID" value="NC_005027.1"/>
</dbReference>
<dbReference type="RefSeq" id="WP_007326800.1">
    <property type="nucleotide sequence ID" value="NC_005027.1"/>
</dbReference>
<dbReference type="SMR" id="Q7UN16"/>
<dbReference type="FunCoup" id="Q7UN16">
    <property type="interactions" value="519"/>
</dbReference>
<dbReference type="STRING" id="243090.RB7838"/>
<dbReference type="EnsemblBacteria" id="CAD75603">
    <property type="protein sequence ID" value="CAD75603"/>
    <property type="gene ID" value="RB7838"/>
</dbReference>
<dbReference type="GeneID" id="90608441"/>
<dbReference type="KEGG" id="rba:RB7838"/>
<dbReference type="PATRIC" id="fig|243090.15.peg.3786"/>
<dbReference type="eggNOG" id="COG0185">
    <property type="taxonomic scope" value="Bacteria"/>
</dbReference>
<dbReference type="HOGENOM" id="CLU_144911_0_1_0"/>
<dbReference type="InParanoid" id="Q7UN16"/>
<dbReference type="OrthoDB" id="9797833at2"/>
<dbReference type="Proteomes" id="UP000001025">
    <property type="component" value="Chromosome"/>
</dbReference>
<dbReference type="GO" id="GO:0005737">
    <property type="term" value="C:cytoplasm"/>
    <property type="evidence" value="ECO:0007669"/>
    <property type="project" value="UniProtKB-ARBA"/>
</dbReference>
<dbReference type="GO" id="GO:0015935">
    <property type="term" value="C:small ribosomal subunit"/>
    <property type="evidence" value="ECO:0007669"/>
    <property type="project" value="InterPro"/>
</dbReference>
<dbReference type="GO" id="GO:0019843">
    <property type="term" value="F:rRNA binding"/>
    <property type="evidence" value="ECO:0007669"/>
    <property type="project" value="UniProtKB-UniRule"/>
</dbReference>
<dbReference type="GO" id="GO:0003735">
    <property type="term" value="F:structural constituent of ribosome"/>
    <property type="evidence" value="ECO:0000318"/>
    <property type="project" value="GO_Central"/>
</dbReference>
<dbReference type="GO" id="GO:0000028">
    <property type="term" value="P:ribosomal small subunit assembly"/>
    <property type="evidence" value="ECO:0000318"/>
    <property type="project" value="GO_Central"/>
</dbReference>
<dbReference type="GO" id="GO:0006412">
    <property type="term" value="P:translation"/>
    <property type="evidence" value="ECO:0007669"/>
    <property type="project" value="UniProtKB-UniRule"/>
</dbReference>
<dbReference type="FunFam" id="3.30.860.10:FF:000001">
    <property type="entry name" value="30S ribosomal protein S19"/>
    <property type="match status" value="1"/>
</dbReference>
<dbReference type="Gene3D" id="3.30.860.10">
    <property type="entry name" value="30s Ribosomal Protein S19, Chain A"/>
    <property type="match status" value="1"/>
</dbReference>
<dbReference type="HAMAP" id="MF_00531">
    <property type="entry name" value="Ribosomal_uS19"/>
    <property type="match status" value="1"/>
</dbReference>
<dbReference type="InterPro" id="IPR002222">
    <property type="entry name" value="Ribosomal_uS19"/>
</dbReference>
<dbReference type="InterPro" id="IPR005732">
    <property type="entry name" value="Ribosomal_uS19_bac-type"/>
</dbReference>
<dbReference type="InterPro" id="IPR020934">
    <property type="entry name" value="Ribosomal_uS19_CS"/>
</dbReference>
<dbReference type="InterPro" id="IPR023575">
    <property type="entry name" value="Ribosomal_uS19_SF"/>
</dbReference>
<dbReference type="NCBIfam" id="TIGR01050">
    <property type="entry name" value="rpsS_bact"/>
    <property type="match status" value="1"/>
</dbReference>
<dbReference type="PANTHER" id="PTHR11880">
    <property type="entry name" value="RIBOSOMAL PROTEIN S19P FAMILY MEMBER"/>
    <property type="match status" value="1"/>
</dbReference>
<dbReference type="PANTHER" id="PTHR11880:SF8">
    <property type="entry name" value="SMALL RIBOSOMAL SUBUNIT PROTEIN US19M"/>
    <property type="match status" value="1"/>
</dbReference>
<dbReference type="Pfam" id="PF00203">
    <property type="entry name" value="Ribosomal_S19"/>
    <property type="match status" value="1"/>
</dbReference>
<dbReference type="PIRSF" id="PIRSF002144">
    <property type="entry name" value="Ribosomal_S19"/>
    <property type="match status" value="1"/>
</dbReference>
<dbReference type="PRINTS" id="PR00975">
    <property type="entry name" value="RIBOSOMALS19"/>
</dbReference>
<dbReference type="SUPFAM" id="SSF54570">
    <property type="entry name" value="Ribosomal protein S19"/>
    <property type="match status" value="1"/>
</dbReference>
<dbReference type="PROSITE" id="PS00323">
    <property type="entry name" value="RIBOSOMAL_S19"/>
    <property type="match status" value="1"/>
</dbReference>
<protein>
    <recommendedName>
        <fullName evidence="1">Small ribosomal subunit protein uS19</fullName>
    </recommendedName>
    <alternativeName>
        <fullName evidence="2">30S ribosomal protein S19</fullName>
    </alternativeName>
</protein>
<reference key="1">
    <citation type="journal article" date="2003" name="Proc. Natl. Acad. Sci. U.S.A.">
        <title>Complete genome sequence of the marine planctomycete Pirellula sp. strain 1.</title>
        <authorList>
            <person name="Gloeckner F.O."/>
            <person name="Kube M."/>
            <person name="Bauer M."/>
            <person name="Teeling H."/>
            <person name="Lombardot T."/>
            <person name="Ludwig W."/>
            <person name="Gade D."/>
            <person name="Beck A."/>
            <person name="Borzym K."/>
            <person name="Heitmann K."/>
            <person name="Rabus R."/>
            <person name="Schlesner H."/>
            <person name="Amann R."/>
            <person name="Reinhardt R."/>
        </authorList>
    </citation>
    <scope>NUCLEOTIDE SEQUENCE [LARGE SCALE GENOMIC DNA]</scope>
    <source>
        <strain>DSM 10527 / NCIMB 13988 / SH1</strain>
    </source>
</reference>
<accession>Q7UN16</accession>
<keyword id="KW-1185">Reference proteome</keyword>
<keyword id="KW-0687">Ribonucleoprotein</keyword>
<keyword id="KW-0689">Ribosomal protein</keyword>
<keyword id="KW-0694">RNA-binding</keyword>
<keyword id="KW-0699">rRNA-binding</keyword>
<evidence type="ECO:0000255" key="1">
    <source>
        <dbReference type="HAMAP-Rule" id="MF_00531"/>
    </source>
</evidence>
<evidence type="ECO:0000305" key="2"/>
<name>RS19_RHOBA</name>
<gene>
    <name evidence="1" type="primary">rpsS</name>
    <name type="ordered locus">RB7838</name>
</gene>
<proteinExistence type="inferred from homology"/>
<feature type="chain" id="PRO_0000129889" description="Small ribosomal subunit protein uS19">
    <location>
        <begin position="1"/>
        <end position="89"/>
    </location>
</feature>
<comment type="function">
    <text evidence="1">Protein S19 forms a complex with S13 that binds strongly to the 16S ribosomal RNA.</text>
</comment>
<comment type="similarity">
    <text evidence="1">Belongs to the universal ribosomal protein uS19 family.</text>
</comment>